<organism evidence="5">
    <name type="scientific">Triticum aestivum</name>
    <name type="common">Wheat</name>
    <dbReference type="NCBI Taxonomy" id="4565"/>
    <lineage>
        <taxon>Eukaryota</taxon>
        <taxon>Viridiplantae</taxon>
        <taxon>Streptophyta</taxon>
        <taxon>Embryophyta</taxon>
        <taxon>Tracheophyta</taxon>
        <taxon>Spermatophyta</taxon>
        <taxon>Magnoliopsida</taxon>
        <taxon>Liliopsida</taxon>
        <taxon>Poales</taxon>
        <taxon>Poaceae</taxon>
        <taxon>BOP clade</taxon>
        <taxon>Pooideae</taxon>
        <taxon>Triticodae</taxon>
        <taxon>Triticeae</taxon>
        <taxon>Triticinae</taxon>
        <taxon>Triticum</taxon>
    </lineage>
</organism>
<keyword id="KW-0150">Chloroplast</keyword>
<keyword id="KW-0472">Membrane</keyword>
<keyword id="KW-0934">Plastid</keyword>
<keyword id="KW-1185">Reference proteome</keyword>
<keyword id="KW-0808">Transferase</keyword>
<keyword id="KW-0809">Transit peptide</keyword>
<keyword id="KW-0812">Transmembrane</keyword>
<keyword id="KW-1133">Transmembrane helix</keyword>
<evidence type="ECO:0000250" key="1">
    <source>
        <dbReference type="UniProtKB" id="Q7XB14"/>
    </source>
</evidence>
<evidence type="ECO:0000255" key="2"/>
<evidence type="ECO:0000303" key="3">
    <source>
    </source>
</evidence>
<evidence type="ECO:0000305" key="4"/>
<evidence type="ECO:0000312" key="5">
    <source>
        <dbReference type="EMBL" id="AAP43912.1"/>
    </source>
</evidence>
<name>HGGT_WHEAT</name>
<proteinExistence type="evidence at transcript level"/>
<protein>
    <recommendedName>
        <fullName evidence="3">Homogentisate geranylgeranyltransferase</fullName>
        <shortName evidence="3">HGGT</shortName>
        <ecNumber evidence="1">2.5.1.116</ecNumber>
    </recommendedName>
</protein>
<sequence length="408" mass="45138">MQATTAAAAAQLLTDTRRGPRCSRARLGATRLSWPGRFAVEAFAGRCQSSATTVTHRFSAISQATSPRRKARRQCSDDQSALQAGCSKVNRDQHGYDVNWFEEISQEVSKKLRAFYQFCRPHTIFGTIIGITSVSLLPMKSIDDFTATVLKGYLEALAAALCMNIYVVGLNQLYDIQIDKINKPGLPLAAGEFSVATGVFLVVTFLIMSFSIGIHSGSVPLMYALVVSFLLGSAYSIEAPLLRWKRHALLAASCILFVRAILVQLAFFAHMQQHVLKRPLAATKSLVFATLFMCCFSAVIALFKDIPDVDGDRDFGIQSLSVRLGPQRVYQLCISILLTAYLAATVVGASSTHLLQKIITVSGHGLLALTLWQRARHLEVENQARVTSFYMFIWKLFYAEYFLIPFVQ</sequence>
<dbReference type="EC" id="2.5.1.116" evidence="1"/>
<dbReference type="EMBL" id="AY222861">
    <property type="protein sequence ID" value="AAP43912.1"/>
    <property type="molecule type" value="mRNA"/>
</dbReference>
<dbReference type="SMR" id="Q7XB13"/>
<dbReference type="STRING" id="4565.Q7XB13"/>
<dbReference type="PaxDb" id="4565-Traes_7AL_3B0FC6F2A.1"/>
<dbReference type="EnsemblPlants" id="TraesARI7A03G03993050.2">
    <property type="protein sequence ID" value="TraesARI7A03G03993050.2"/>
    <property type="gene ID" value="TraesARI7A03G03993050"/>
</dbReference>
<dbReference type="EnsemblPlants" id="TraesCAD_scaffold_097383_01G000300.1">
    <property type="protein sequence ID" value="TraesCAD_scaffold_097383_01G000300.1"/>
    <property type="gene ID" value="TraesCAD_scaffold_097383_01G000300"/>
</dbReference>
<dbReference type="EnsemblPlants" id="TraesCS7A02G510700.1">
    <property type="protein sequence ID" value="TraesCS7A02G510700.1"/>
    <property type="gene ID" value="TraesCS7A02G510700"/>
</dbReference>
<dbReference type="EnsemblPlants" id="TraesCS7A03G1239900.1">
    <property type="protein sequence ID" value="TraesCS7A03G1239900.1.CDS"/>
    <property type="gene ID" value="TraesCS7A03G1239900"/>
</dbReference>
<dbReference type="EnsemblPlants" id="TraesLDM7A03G04020990.1">
    <property type="protein sequence ID" value="TraesLDM7A03G04020990.1"/>
    <property type="gene ID" value="TraesLDM7A03G04020990"/>
</dbReference>
<dbReference type="EnsemblPlants" id="TraesMAC7A03G04015160.1">
    <property type="protein sequence ID" value="TraesMAC7A03G04015160.1"/>
    <property type="gene ID" value="TraesMAC7A03G04015160"/>
</dbReference>
<dbReference type="EnsemblPlants" id="TraesNOR7A03G04061000.1">
    <property type="protein sequence ID" value="TraesNOR7A03G04061000.1"/>
    <property type="gene ID" value="TraesNOR7A03G04061000"/>
</dbReference>
<dbReference type="EnsemblPlants" id="TraesPARA_EIv1.0_2349530.5">
    <property type="protein sequence ID" value="TraesPARA_EIv1.0_2349530.5.CDS"/>
    <property type="gene ID" value="TraesPARA_EIv1.0_2349530"/>
</dbReference>
<dbReference type="EnsemblPlants" id="TraesROB_scaffold_024134_01G000300.1">
    <property type="protein sequence ID" value="TraesROB_scaffold_024134_01G000300.1"/>
    <property type="gene ID" value="TraesROB_scaffold_024134_01G000300"/>
</dbReference>
<dbReference type="EnsemblPlants" id="TraesSTA7A03G04013160.1">
    <property type="protein sequence ID" value="TraesSTA7A03G04013160.1"/>
    <property type="gene ID" value="TraesSTA7A03G04013160"/>
</dbReference>
<dbReference type="EnsemblPlants" id="TraesSYM7A03G03971940.1">
    <property type="protein sequence ID" value="TraesSYM7A03G03971940.1"/>
    <property type="gene ID" value="TraesSYM7A03G03971940"/>
</dbReference>
<dbReference type="EnsemblPlants" id="TraesWEE_scaffold_060322_01G000100.1">
    <property type="protein sequence ID" value="TraesWEE_scaffold_060322_01G000100.1"/>
    <property type="gene ID" value="TraesWEE_scaffold_060322_01G000100"/>
</dbReference>
<dbReference type="Gramene" id="TraesARI7A03G03993050.2">
    <property type="protein sequence ID" value="TraesARI7A03G03993050.2"/>
    <property type="gene ID" value="TraesARI7A03G03993050"/>
</dbReference>
<dbReference type="Gramene" id="TraesCAD_scaffold_097383_01G000300.1">
    <property type="protein sequence ID" value="TraesCAD_scaffold_097383_01G000300.1"/>
    <property type="gene ID" value="TraesCAD_scaffold_097383_01G000300"/>
</dbReference>
<dbReference type="Gramene" id="TraesCS7A02G510700.1">
    <property type="protein sequence ID" value="TraesCS7A02G510700.1"/>
    <property type="gene ID" value="TraesCS7A02G510700"/>
</dbReference>
<dbReference type="Gramene" id="TraesCS7A03G1239900.1">
    <property type="protein sequence ID" value="TraesCS7A03G1239900.1.CDS"/>
    <property type="gene ID" value="TraesCS7A03G1239900"/>
</dbReference>
<dbReference type="Gramene" id="TraesLDM7A03G04020990.1">
    <property type="protein sequence ID" value="TraesLDM7A03G04020990.1"/>
    <property type="gene ID" value="TraesLDM7A03G04020990"/>
</dbReference>
<dbReference type="Gramene" id="TraesMAC7A03G04015160.1">
    <property type="protein sequence ID" value="TraesMAC7A03G04015160.1"/>
    <property type="gene ID" value="TraesMAC7A03G04015160"/>
</dbReference>
<dbReference type="Gramene" id="TraesNOR7A03G04061000.1">
    <property type="protein sequence ID" value="TraesNOR7A03G04061000.1"/>
    <property type="gene ID" value="TraesNOR7A03G04061000"/>
</dbReference>
<dbReference type="Gramene" id="TraesPARA_EIv1.0_2349530.5">
    <property type="protein sequence ID" value="TraesPARA_EIv1.0_2349530.5.CDS"/>
    <property type="gene ID" value="TraesPARA_EIv1.0_2349530"/>
</dbReference>
<dbReference type="Gramene" id="TraesROB_scaffold_024134_01G000300.1">
    <property type="protein sequence ID" value="TraesROB_scaffold_024134_01G000300.1"/>
    <property type="gene ID" value="TraesROB_scaffold_024134_01G000300"/>
</dbReference>
<dbReference type="Gramene" id="TraesSTA7A03G04013160.1">
    <property type="protein sequence ID" value="TraesSTA7A03G04013160.1"/>
    <property type="gene ID" value="TraesSTA7A03G04013160"/>
</dbReference>
<dbReference type="Gramene" id="TraesSYM7A03G03971940.1">
    <property type="protein sequence ID" value="TraesSYM7A03G03971940.1"/>
    <property type="gene ID" value="TraesSYM7A03G03971940"/>
</dbReference>
<dbReference type="Gramene" id="TraesWEE_scaffold_060322_01G000100.1">
    <property type="protein sequence ID" value="TraesWEE_scaffold_060322_01G000100.1"/>
    <property type="gene ID" value="TraesWEE_scaffold_060322_01G000100"/>
</dbReference>
<dbReference type="eggNOG" id="ENOG502QZ7Z">
    <property type="taxonomic scope" value="Eukaryota"/>
</dbReference>
<dbReference type="OMA" id="FATVFMC"/>
<dbReference type="OrthoDB" id="1502398at2759"/>
<dbReference type="UniPathway" id="UPA00160"/>
<dbReference type="Proteomes" id="UP000019116">
    <property type="component" value="Chromosome 7A"/>
</dbReference>
<dbReference type="ExpressionAtlas" id="Q7XB13">
    <property type="expression patterns" value="baseline and differential"/>
</dbReference>
<dbReference type="GO" id="GO:0031969">
    <property type="term" value="C:chloroplast membrane"/>
    <property type="evidence" value="ECO:0007669"/>
    <property type="project" value="UniProtKB-SubCell"/>
</dbReference>
<dbReference type="GO" id="GO:0010356">
    <property type="term" value="F:homogentisate geranylgeranyltransferase activity"/>
    <property type="evidence" value="ECO:0007669"/>
    <property type="project" value="UniProtKB-EC"/>
</dbReference>
<dbReference type="GO" id="GO:0010189">
    <property type="term" value="P:vitamin E biosynthetic process"/>
    <property type="evidence" value="ECO:0007669"/>
    <property type="project" value="UniProtKB-UniPathway"/>
</dbReference>
<dbReference type="CDD" id="cd13960">
    <property type="entry name" value="PT_UbiA_HPT1"/>
    <property type="match status" value="1"/>
</dbReference>
<dbReference type="FunFam" id="1.10.357.140:FF:000011">
    <property type="entry name" value="Homogentisate phytyltransferase 1"/>
    <property type="match status" value="1"/>
</dbReference>
<dbReference type="Gene3D" id="1.10.357.140">
    <property type="entry name" value="UbiA prenyltransferase"/>
    <property type="match status" value="1"/>
</dbReference>
<dbReference type="InterPro" id="IPR044502">
    <property type="entry name" value="AtHST-like"/>
</dbReference>
<dbReference type="InterPro" id="IPR000537">
    <property type="entry name" value="UbiA_prenyltransferase"/>
</dbReference>
<dbReference type="InterPro" id="IPR044878">
    <property type="entry name" value="UbiA_sf"/>
</dbReference>
<dbReference type="NCBIfam" id="NF009525">
    <property type="entry name" value="PRK12887.1"/>
    <property type="match status" value="1"/>
</dbReference>
<dbReference type="PANTHER" id="PTHR43009:SF7">
    <property type="entry name" value="HOMOGENTISATE GERANYLGERANYLTRANSFERASE, CHLOROPLASTIC"/>
    <property type="match status" value="1"/>
</dbReference>
<dbReference type="PANTHER" id="PTHR43009">
    <property type="entry name" value="HOMOGENTISATE SOLANESYLTRANSFERASE, CHLOROPLASTIC"/>
    <property type="match status" value="1"/>
</dbReference>
<dbReference type="Pfam" id="PF01040">
    <property type="entry name" value="UbiA"/>
    <property type="match status" value="1"/>
</dbReference>
<reference key="1">
    <citation type="journal article" date="2003" name="Nat. Biotechnol.">
        <title>Metabolic redesign of vitamin E biosynthesis in plants for tocotrienol production and increased antioxidant content.</title>
        <authorList>
            <person name="Cahoon E.B."/>
            <person name="Hall S.E."/>
            <person name="Ripp K.G."/>
            <person name="Ganzke T.S."/>
            <person name="Hitz W.D."/>
            <person name="Coughlan S.J."/>
        </authorList>
    </citation>
    <scope>NUCLEOTIDE SEQUENCE [MRNA]</scope>
    <source>
        <tissue evidence="5">Kernel</tissue>
    </source>
</reference>
<gene>
    <name evidence="3" type="primary">HGGT</name>
</gene>
<accession>Q7XB13</accession>
<feature type="transit peptide" description="Chloroplast" evidence="2">
    <location>
        <begin position="1"/>
        <end position="68"/>
    </location>
</feature>
<feature type="chain" id="PRO_0000430737" description="Homogentisate geranylgeranyltransferase" evidence="2">
    <location>
        <begin position="69"/>
        <end position="408"/>
    </location>
</feature>
<feature type="transmembrane region" description="Helical; Name=1" evidence="2">
    <location>
        <begin position="122"/>
        <end position="142"/>
    </location>
</feature>
<feature type="transmembrane region" description="Helical; Name=2" evidence="2">
    <location>
        <begin position="149"/>
        <end position="169"/>
    </location>
</feature>
<feature type="transmembrane region" description="Helical; Name=3" evidence="2">
    <location>
        <begin position="194"/>
        <end position="214"/>
    </location>
</feature>
<feature type="transmembrane region" description="Helical; Name=4" evidence="2">
    <location>
        <begin position="217"/>
        <end position="237"/>
    </location>
</feature>
<feature type="transmembrane region" description="Helical; Name=5" evidence="2">
    <location>
        <begin position="248"/>
        <end position="268"/>
    </location>
</feature>
<feature type="transmembrane region" description="Helical; Name=6" evidence="2">
    <location>
        <begin position="286"/>
        <end position="306"/>
    </location>
</feature>
<feature type="transmembrane region" description="Helical; Name=7" evidence="2">
    <location>
        <begin position="329"/>
        <end position="349"/>
    </location>
</feature>
<feature type="transmembrane region" description="Helical; Name=8" evidence="2">
    <location>
        <begin position="352"/>
        <end position="372"/>
    </location>
</feature>
<feature type="transmembrane region" description="Helical; Name=9" evidence="2">
    <location>
        <begin position="386"/>
        <end position="406"/>
    </location>
</feature>
<comment type="function">
    <text evidence="1">Involved in the synthesis of tocotrienol (vitamin E). Catalyzes the condensation of homogentisate and geranylgeranyl diphosphate to form 2-methyl-6-geranylgeranylbenzoquinol. Possesses low activity with phytyl diphosphate as substrate.</text>
</comment>
<comment type="catalytic activity">
    <reaction evidence="1">
        <text>homogentisate + (2E,6E,10E)-geranylgeranyl diphosphate + H(+) = 6-geranylgeranyl-2-methylbenzene-1,4-diol + CO2 + diphosphate</text>
        <dbReference type="Rhea" id="RHEA:38003"/>
        <dbReference type="ChEBI" id="CHEBI:15378"/>
        <dbReference type="ChEBI" id="CHEBI:16169"/>
        <dbReference type="ChEBI" id="CHEBI:16526"/>
        <dbReference type="ChEBI" id="CHEBI:33019"/>
        <dbReference type="ChEBI" id="CHEBI:58756"/>
        <dbReference type="ChEBI" id="CHEBI:75411"/>
        <dbReference type="EC" id="2.5.1.116"/>
    </reaction>
</comment>
<comment type="pathway">
    <text evidence="4">Cofactor biosynthesis; tocopherol biosynthesis.</text>
</comment>
<comment type="subcellular location">
    <subcellularLocation>
        <location evidence="1">Plastid</location>
        <location evidence="1">Chloroplast membrane</location>
        <topology evidence="2">Multi-pass membrane protein</topology>
    </subcellularLocation>
</comment>
<comment type="miscellaneous">
    <text evidence="3">Seeds of most monocots are enriched in tocotrienols and contain only small amounts of tocopherols.</text>
</comment>
<comment type="similarity">
    <text evidence="4">Belongs to the UbiA prenyltransferase family.</text>
</comment>